<accession>Q042P3</accession>
<keyword id="KW-0963">Cytoplasm</keyword>
<keyword id="KW-0238">DNA-binding</keyword>
<keyword id="KW-0677">Repeat</keyword>
<keyword id="KW-0804">Transcription</keyword>
<keyword id="KW-0805">Transcription regulation</keyword>
<dbReference type="EMBL" id="CP000413">
    <property type="protein sequence ID" value="ABJ60579.1"/>
    <property type="molecule type" value="Genomic_DNA"/>
</dbReference>
<dbReference type="RefSeq" id="WP_003647097.1">
    <property type="nucleotide sequence ID" value="NZ_WBMG01000002.1"/>
</dbReference>
<dbReference type="SMR" id="Q042P3"/>
<dbReference type="GeneID" id="29639530"/>
<dbReference type="KEGG" id="lga:LGAS_1210"/>
<dbReference type="HOGENOM" id="CLU_107907_0_5_9"/>
<dbReference type="BioCyc" id="LGAS324831:G1G6Y-1206-MONOMER"/>
<dbReference type="Proteomes" id="UP000000664">
    <property type="component" value="Chromosome"/>
</dbReference>
<dbReference type="GO" id="GO:0005737">
    <property type="term" value="C:cytoplasm"/>
    <property type="evidence" value="ECO:0007669"/>
    <property type="project" value="UniProtKB-UniRule"/>
</dbReference>
<dbReference type="GO" id="GO:0009295">
    <property type="term" value="C:nucleoid"/>
    <property type="evidence" value="ECO:0007669"/>
    <property type="project" value="UniProtKB-SubCell"/>
</dbReference>
<dbReference type="GO" id="GO:0003700">
    <property type="term" value="F:DNA-binding transcription factor activity"/>
    <property type="evidence" value="ECO:0007669"/>
    <property type="project" value="UniProtKB-UniRule"/>
</dbReference>
<dbReference type="GO" id="GO:0000976">
    <property type="term" value="F:transcription cis-regulatory region binding"/>
    <property type="evidence" value="ECO:0007669"/>
    <property type="project" value="TreeGrafter"/>
</dbReference>
<dbReference type="GO" id="GO:2000143">
    <property type="term" value="P:negative regulation of DNA-templated transcription initiation"/>
    <property type="evidence" value="ECO:0007669"/>
    <property type="project" value="TreeGrafter"/>
</dbReference>
<dbReference type="CDD" id="cd16321">
    <property type="entry name" value="MraZ_C"/>
    <property type="match status" value="1"/>
</dbReference>
<dbReference type="CDD" id="cd16320">
    <property type="entry name" value="MraZ_N"/>
    <property type="match status" value="1"/>
</dbReference>
<dbReference type="FunFam" id="3.40.1550.20:FF:000002">
    <property type="entry name" value="Transcriptional regulator MraZ"/>
    <property type="match status" value="1"/>
</dbReference>
<dbReference type="Gene3D" id="3.40.1550.20">
    <property type="entry name" value="Transcriptional regulator MraZ domain"/>
    <property type="match status" value="1"/>
</dbReference>
<dbReference type="HAMAP" id="MF_01008">
    <property type="entry name" value="MraZ"/>
    <property type="match status" value="1"/>
</dbReference>
<dbReference type="InterPro" id="IPR003444">
    <property type="entry name" value="MraZ"/>
</dbReference>
<dbReference type="InterPro" id="IPR035644">
    <property type="entry name" value="MraZ_C"/>
</dbReference>
<dbReference type="InterPro" id="IPR020603">
    <property type="entry name" value="MraZ_dom"/>
</dbReference>
<dbReference type="InterPro" id="IPR035642">
    <property type="entry name" value="MraZ_N"/>
</dbReference>
<dbReference type="InterPro" id="IPR038619">
    <property type="entry name" value="MraZ_sf"/>
</dbReference>
<dbReference type="InterPro" id="IPR007159">
    <property type="entry name" value="SpoVT-AbrB_dom"/>
</dbReference>
<dbReference type="InterPro" id="IPR037914">
    <property type="entry name" value="SpoVT-AbrB_sf"/>
</dbReference>
<dbReference type="NCBIfam" id="TIGR00242">
    <property type="entry name" value="division/cell wall cluster transcriptional repressor MraZ"/>
    <property type="match status" value="1"/>
</dbReference>
<dbReference type="PANTHER" id="PTHR34701">
    <property type="entry name" value="TRANSCRIPTIONAL REGULATOR MRAZ"/>
    <property type="match status" value="1"/>
</dbReference>
<dbReference type="PANTHER" id="PTHR34701:SF1">
    <property type="entry name" value="TRANSCRIPTIONAL REGULATOR MRAZ"/>
    <property type="match status" value="1"/>
</dbReference>
<dbReference type="Pfam" id="PF02381">
    <property type="entry name" value="MraZ"/>
    <property type="match status" value="2"/>
</dbReference>
<dbReference type="SUPFAM" id="SSF89447">
    <property type="entry name" value="AbrB/MazE/MraZ-like"/>
    <property type="match status" value="1"/>
</dbReference>
<dbReference type="PROSITE" id="PS51740">
    <property type="entry name" value="SPOVT_ABRB"/>
    <property type="match status" value="2"/>
</dbReference>
<organism>
    <name type="scientific">Lactobacillus gasseri (strain ATCC 33323 / DSM 20243 / BCRC 14619 / CIP 102991 / JCM 1131 / KCTC 3163 / NCIMB 11718 / NCTC 13722 / AM63)</name>
    <dbReference type="NCBI Taxonomy" id="324831"/>
    <lineage>
        <taxon>Bacteria</taxon>
        <taxon>Bacillati</taxon>
        <taxon>Bacillota</taxon>
        <taxon>Bacilli</taxon>
        <taxon>Lactobacillales</taxon>
        <taxon>Lactobacillaceae</taxon>
        <taxon>Lactobacillus</taxon>
    </lineage>
</organism>
<gene>
    <name evidence="1" type="primary">mraZ</name>
    <name type="ordered locus">LGAS_1210</name>
</gene>
<evidence type="ECO:0000255" key="1">
    <source>
        <dbReference type="HAMAP-Rule" id="MF_01008"/>
    </source>
</evidence>
<evidence type="ECO:0000255" key="2">
    <source>
        <dbReference type="PROSITE-ProRule" id="PRU01076"/>
    </source>
</evidence>
<comment type="subunit">
    <text evidence="1">Forms oligomers.</text>
</comment>
<comment type="subcellular location">
    <subcellularLocation>
        <location evidence="1">Cytoplasm</location>
        <location evidence="1">Nucleoid</location>
    </subcellularLocation>
</comment>
<comment type="similarity">
    <text evidence="1">Belongs to the MraZ family.</text>
</comment>
<protein>
    <recommendedName>
        <fullName>Transcriptional regulator MraZ</fullName>
    </recommendedName>
</protein>
<sequence length="143" mass="16657">MFMGEYHHNLDSKGRLIIPAKFRDEIGEKMVFTRGMEGCIFGYPIEEWQKIEAKLAKLPLTKRSARKFTRLFYSGAMESEFDKQGRVNLTMTLKEHAALIKECVIVGVSNRIEIWSAERWNDFSEEANENYDDIAEDLDDIEL</sequence>
<name>MRAZ_LACGA</name>
<proteinExistence type="inferred from homology"/>
<feature type="chain" id="PRO_1000062889" description="Transcriptional regulator MraZ">
    <location>
        <begin position="1"/>
        <end position="143"/>
    </location>
</feature>
<feature type="domain" description="SpoVT-AbrB 1" evidence="2">
    <location>
        <begin position="5"/>
        <end position="47"/>
    </location>
</feature>
<feature type="domain" description="SpoVT-AbrB 2" evidence="2">
    <location>
        <begin position="76"/>
        <end position="119"/>
    </location>
</feature>
<reference key="1">
    <citation type="journal article" date="2006" name="Proc. Natl. Acad. Sci. U.S.A.">
        <title>Comparative genomics of the lactic acid bacteria.</title>
        <authorList>
            <person name="Makarova K.S."/>
            <person name="Slesarev A."/>
            <person name="Wolf Y.I."/>
            <person name="Sorokin A."/>
            <person name="Mirkin B."/>
            <person name="Koonin E.V."/>
            <person name="Pavlov A."/>
            <person name="Pavlova N."/>
            <person name="Karamychev V."/>
            <person name="Polouchine N."/>
            <person name="Shakhova V."/>
            <person name="Grigoriev I."/>
            <person name="Lou Y."/>
            <person name="Rohksar D."/>
            <person name="Lucas S."/>
            <person name="Huang K."/>
            <person name="Goodstein D.M."/>
            <person name="Hawkins T."/>
            <person name="Plengvidhya V."/>
            <person name="Welker D."/>
            <person name="Hughes J."/>
            <person name="Goh Y."/>
            <person name="Benson A."/>
            <person name="Baldwin K."/>
            <person name="Lee J.-H."/>
            <person name="Diaz-Muniz I."/>
            <person name="Dosti B."/>
            <person name="Smeianov V."/>
            <person name="Wechter W."/>
            <person name="Barabote R."/>
            <person name="Lorca G."/>
            <person name="Altermann E."/>
            <person name="Barrangou R."/>
            <person name="Ganesan B."/>
            <person name="Xie Y."/>
            <person name="Rawsthorne H."/>
            <person name="Tamir D."/>
            <person name="Parker C."/>
            <person name="Breidt F."/>
            <person name="Broadbent J.R."/>
            <person name="Hutkins R."/>
            <person name="O'Sullivan D."/>
            <person name="Steele J."/>
            <person name="Unlu G."/>
            <person name="Saier M.H. Jr."/>
            <person name="Klaenhammer T."/>
            <person name="Richardson P."/>
            <person name="Kozyavkin S."/>
            <person name="Weimer B.C."/>
            <person name="Mills D.A."/>
        </authorList>
    </citation>
    <scope>NUCLEOTIDE SEQUENCE [LARGE SCALE GENOMIC DNA]</scope>
    <source>
        <strain>ATCC 33323 / DSM 20243 / BCRC 14619 / CIP 102991 / JCM 1131 / KCTC 3163 / NCIMB 11718 / NCTC 13722 / AM63</strain>
    </source>
</reference>